<accession>B2TQ24</accession>
<name>ARLY_CLOBB</name>
<proteinExistence type="inferred from homology"/>
<comment type="catalytic activity">
    <reaction evidence="1">
        <text>2-(N(omega)-L-arginino)succinate = fumarate + L-arginine</text>
        <dbReference type="Rhea" id="RHEA:24020"/>
        <dbReference type="ChEBI" id="CHEBI:29806"/>
        <dbReference type="ChEBI" id="CHEBI:32682"/>
        <dbReference type="ChEBI" id="CHEBI:57472"/>
        <dbReference type="EC" id="4.3.2.1"/>
    </reaction>
</comment>
<comment type="pathway">
    <text evidence="1">Amino-acid biosynthesis; L-arginine biosynthesis; L-arginine from L-ornithine and carbamoyl phosphate: step 3/3.</text>
</comment>
<comment type="subcellular location">
    <subcellularLocation>
        <location evidence="1">Cytoplasm</location>
    </subcellularLocation>
</comment>
<comment type="similarity">
    <text evidence="1">Belongs to the lyase 1 family. Argininosuccinate lyase subfamily.</text>
</comment>
<reference key="1">
    <citation type="submission" date="2008-04" db="EMBL/GenBank/DDBJ databases">
        <title>Complete sequence of Clostridium botulinum strain Eklund.</title>
        <authorList>
            <person name="Brinkac L.M."/>
            <person name="Brown J.L."/>
            <person name="Bruce D."/>
            <person name="Detter C."/>
            <person name="Munk C."/>
            <person name="Smith L.A."/>
            <person name="Smith T.J."/>
            <person name="Sutton G."/>
            <person name="Brettin T.S."/>
        </authorList>
    </citation>
    <scope>NUCLEOTIDE SEQUENCE [LARGE SCALE GENOMIC DNA]</scope>
    <source>
        <strain>Eklund 17B / Type B</strain>
    </source>
</reference>
<keyword id="KW-0028">Amino-acid biosynthesis</keyword>
<keyword id="KW-0055">Arginine biosynthesis</keyword>
<keyword id="KW-0963">Cytoplasm</keyword>
<keyword id="KW-0456">Lyase</keyword>
<evidence type="ECO:0000255" key="1">
    <source>
        <dbReference type="HAMAP-Rule" id="MF_00006"/>
    </source>
</evidence>
<dbReference type="EC" id="4.3.2.1" evidence="1"/>
<dbReference type="EMBL" id="CP001056">
    <property type="protein sequence ID" value="ACD22821.1"/>
    <property type="molecule type" value="Genomic_DNA"/>
</dbReference>
<dbReference type="SMR" id="B2TQ24"/>
<dbReference type="KEGG" id="cbk:CLL_A3115"/>
<dbReference type="PATRIC" id="fig|935198.13.peg.3079"/>
<dbReference type="HOGENOM" id="CLU_027272_2_3_9"/>
<dbReference type="UniPathway" id="UPA00068">
    <property type="reaction ID" value="UER00114"/>
</dbReference>
<dbReference type="Proteomes" id="UP000001195">
    <property type="component" value="Chromosome"/>
</dbReference>
<dbReference type="GO" id="GO:0005829">
    <property type="term" value="C:cytosol"/>
    <property type="evidence" value="ECO:0007669"/>
    <property type="project" value="TreeGrafter"/>
</dbReference>
<dbReference type="GO" id="GO:0004056">
    <property type="term" value="F:argininosuccinate lyase activity"/>
    <property type="evidence" value="ECO:0007669"/>
    <property type="project" value="UniProtKB-UniRule"/>
</dbReference>
<dbReference type="GO" id="GO:0042450">
    <property type="term" value="P:arginine biosynthetic process via ornithine"/>
    <property type="evidence" value="ECO:0007669"/>
    <property type="project" value="InterPro"/>
</dbReference>
<dbReference type="GO" id="GO:0006526">
    <property type="term" value="P:L-arginine biosynthetic process"/>
    <property type="evidence" value="ECO:0007669"/>
    <property type="project" value="UniProtKB-UniRule"/>
</dbReference>
<dbReference type="CDD" id="cd01359">
    <property type="entry name" value="Argininosuccinate_lyase"/>
    <property type="match status" value="1"/>
</dbReference>
<dbReference type="FunFam" id="1.10.40.30:FF:000001">
    <property type="entry name" value="Argininosuccinate lyase"/>
    <property type="match status" value="1"/>
</dbReference>
<dbReference type="FunFam" id="1.20.200.10:FF:000002">
    <property type="entry name" value="Argininosuccinate lyase"/>
    <property type="match status" value="1"/>
</dbReference>
<dbReference type="Gene3D" id="1.10.40.30">
    <property type="entry name" value="Fumarase/aspartase (C-terminal domain)"/>
    <property type="match status" value="1"/>
</dbReference>
<dbReference type="Gene3D" id="1.20.200.10">
    <property type="entry name" value="Fumarase/aspartase (Central domain)"/>
    <property type="match status" value="1"/>
</dbReference>
<dbReference type="Gene3D" id="1.10.275.10">
    <property type="entry name" value="Fumarase/aspartase (N-terminal domain)"/>
    <property type="match status" value="1"/>
</dbReference>
<dbReference type="HAMAP" id="MF_00006">
    <property type="entry name" value="Arg_succ_lyase"/>
    <property type="match status" value="1"/>
</dbReference>
<dbReference type="InterPro" id="IPR029419">
    <property type="entry name" value="Arg_succ_lyase_C"/>
</dbReference>
<dbReference type="InterPro" id="IPR009049">
    <property type="entry name" value="Argininosuccinate_lyase"/>
</dbReference>
<dbReference type="InterPro" id="IPR024083">
    <property type="entry name" value="Fumarase/histidase_N"/>
</dbReference>
<dbReference type="InterPro" id="IPR020557">
    <property type="entry name" value="Fumarate_lyase_CS"/>
</dbReference>
<dbReference type="InterPro" id="IPR000362">
    <property type="entry name" value="Fumarate_lyase_fam"/>
</dbReference>
<dbReference type="InterPro" id="IPR022761">
    <property type="entry name" value="Fumarate_lyase_N"/>
</dbReference>
<dbReference type="InterPro" id="IPR008948">
    <property type="entry name" value="L-Aspartase-like"/>
</dbReference>
<dbReference type="NCBIfam" id="TIGR00838">
    <property type="entry name" value="argH"/>
    <property type="match status" value="1"/>
</dbReference>
<dbReference type="PANTHER" id="PTHR43814">
    <property type="entry name" value="ARGININOSUCCINATE LYASE"/>
    <property type="match status" value="1"/>
</dbReference>
<dbReference type="PANTHER" id="PTHR43814:SF1">
    <property type="entry name" value="ARGININOSUCCINATE LYASE"/>
    <property type="match status" value="1"/>
</dbReference>
<dbReference type="Pfam" id="PF14698">
    <property type="entry name" value="ASL_C2"/>
    <property type="match status" value="1"/>
</dbReference>
<dbReference type="Pfam" id="PF00206">
    <property type="entry name" value="Lyase_1"/>
    <property type="match status" value="1"/>
</dbReference>
<dbReference type="PRINTS" id="PR00145">
    <property type="entry name" value="ARGSUCLYASE"/>
</dbReference>
<dbReference type="PRINTS" id="PR00149">
    <property type="entry name" value="FUMRATELYASE"/>
</dbReference>
<dbReference type="SUPFAM" id="SSF48557">
    <property type="entry name" value="L-aspartase-like"/>
    <property type="match status" value="1"/>
</dbReference>
<dbReference type="PROSITE" id="PS00163">
    <property type="entry name" value="FUMARATE_LYASES"/>
    <property type="match status" value="1"/>
</dbReference>
<sequence length="465" mass="52652">MKLWGGRFKKGTDELVNDFNSSINIDSRMYKEDIEGSLAHATMLGEQNIISKEASLKITSGLLEILKRMDNNVINVDLTSEDIHSFVESTLTYYIGEYGKMLHTARSRNDQVTLDLKLYLKKALVKLRKDILYLEKVLLEKSKEHISTIMPGYTHMQKAQPITLSHHLLAYAEMFKRDIGRINDAYKRTDSMPLGSGALATSTYPIDRYMVAKDLGFSTITLNSLDSVSDRDYVIETLSALSLIMMHLSRFSEEIILWCTGEFNFVELDDGYSTGSSIMPQKKNPDVAELIRGKTGRVYGDLITLLTVMKGIPLAYNKDMQEDKEALFDALDTVTLSLKTFAGMIKTMKVNKDNMKKSAALGFTNATDLADYLVKKGSYFRDAHGIVGQIVLQCIKDNKMIEDLTLAELKEYSPTFEEDVYEAINLYTCVEERKVIGGPSSESVKFQIKELQEFIHQFKGDEMYD</sequence>
<gene>
    <name evidence="1" type="primary">argH</name>
    <name type="ordered locus">CLL_A3115</name>
</gene>
<feature type="chain" id="PRO_1000089075" description="Argininosuccinate lyase">
    <location>
        <begin position="1"/>
        <end position="465"/>
    </location>
</feature>
<organism>
    <name type="scientific">Clostridium botulinum (strain Eklund 17B / Type B)</name>
    <dbReference type="NCBI Taxonomy" id="935198"/>
    <lineage>
        <taxon>Bacteria</taxon>
        <taxon>Bacillati</taxon>
        <taxon>Bacillota</taxon>
        <taxon>Clostridia</taxon>
        <taxon>Eubacteriales</taxon>
        <taxon>Clostridiaceae</taxon>
        <taxon>Clostridium</taxon>
    </lineage>
</organism>
<protein>
    <recommendedName>
        <fullName evidence="1">Argininosuccinate lyase</fullName>
        <shortName evidence="1">ASAL</shortName>
        <ecNumber evidence="1">4.3.2.1</ecNumber>
    </recommendedName>
    <alternativeName>
        <fullName evidence="1">Arginosuccinase</fullName>
    </alternativeName>
</protein>